<name>RL11_CHLPN</name>
<proteinExistence type="inferred from homology"/>
<reference key="1">
    <citation type="journal article" date="1999" name="Nat. Genet.">
        <title>Comparative genomes of Chlamydia pneumoniae and C. trachomatis.</title>
        <authorList>
            <person name="Kalman S."/>
            <person name="Mitchell W.P."/>
            <person name="Marathe R."/>
            <person name="Lammel C.J."/>
            <person name="Fan J."/>
            <person name="Hyman R.W."/>
            <person name="Olinger L."/>
            <person name="Grimwood J."/>
            <person name="Davis R.W."/>
            <person name="Stephens R.S."/>
        </authorList>
    </citation>
    <scope>NUCLEOTIDE SEQUENCE [LARGE SCALE GENOMIC DNA]</scope>
    <source>
        <strain>CWL029</strain>
    </source>
</reference>
<reference key="2">
    <citation type="journal article" date="2000" name="Nucleic Acids Res.">
        <title>Genome sequences of Chlamydia trachomatis MoPn and Chlamydia pneumoniae AR39.</title>
        <authorList>
            <person name="Read T.D."/>
            <person name="Brunham R.C."/>
            <person name="Shen C."/>
            <person name="Gill S.R."/>
            <person name="Heidelberg J.F."/>
            <person name="White O."/>
            <person name="Hickey E.K."/>
            <person name="Peterson J.D."/>
            <person name="Utterback T.R."/>
            <person name="Berry K.J."/>
            <person name="Bass S."/>
            <person name="Linher K.D."/>
            <person name="Weidman J.F."/>
            <person name="Khouri H.M."/>
            <person name="Craven B."/>
            <person name="Bowman C."/>
            <person name="Dodson R.J."/>
            <person name="Gwinn M.L."/>
            <person name="Nelson W.C."/>
            <person name="DeBoy R.T."/>
            <person name="Kolonay J.F."/>
            <person name="McClarty G."/>
            <person name="Salzberg S.L."/>
            <person name="Eisen J.A."/>
            <person name="Fraser C.M."/>
        </authorList>
    </citation>
    <scope>NUCLEOTIDE SEQUENCE [LARGE SCALE GENOMIC DNA]</scope>
    <source>
        <strain>AR39</strain>
    </source>
</reference>
<reference key="3">
    <citation type="journal article" date="2000" name="Nucleic Acids Res.">
        <title>Comparison of whole genome sequences of Chlamydia pneumoniae J138 from Japan and CWL029 from USA.</title>
        <authorList>
            <person name="Shirai M."/>
            <person name="Hirakawa H."/>
            <person name="Kimoto M."/>
            <person name="Tabuchi M."/>
            <person name="Kishi F."/>
            <person name="Ouchi K."/>
            <person name="Shiba T."/>
            <person name="Ishii K."/>
            <person name="Hattori M."/>
            <person name="Kuhara S."/>
            <person name="Nakazawa T."/>
        </authorList>
    </citation>
    <scope>NUCLEOTIDE SEQUENCE [LARGE SCALE GENOMIC DNA]</scope>
    <source>
        <strain>J138</strain>
    </source>
</reference>
<reference key="4">
    <citation type="submission" date="2002-05" db="EMBL/GenBank/DDBJ databases">
        <title>The genome sequence of Chlamydia pneumoniae TW183 and comparison with other Chlamydia strains based on whole genome sequence analysis.</title>
        <authorList>
            <person name="Geng M.M."/>
            <person name="Schuhmacher A."/>
            <person name="Muehldorfer I."/>
            <person name="Bensch K.W."/>
            <person name="Schaefer K.P."/>
            <person name="Schneider S."/>
            <person name="Pohl T."/>
            <person name="Essig A."/>
            <person name="Marre R."/>
            <person name="Melchers K."/>
        </authorList>
    </citation>
    <scope>NUCLEOTIDE SEQUENCE [LARGE SCALE GENOMIC DNA]</scope>
    <source>
        <strain>TW-183</strain>
    </source>
</reference>
<protein>
    <recommendedName>
        <fullName evidence="1">Large ribosomal subunit protein uL11</fullName>
    </recommendedName>
    <alternativeName>
        <fullName evidence="2">50S ribosomal protein L11</fullName>
    </alternativeName>
</protein>
<comment type="function">
    <text evidence="1">Forms part of the ribosomal stalk which helps the ribosome interact with GTP-bound translation factors.</text>
</comment>
<comment type="subunit">
    <text evidence="1">Part of the ribosomal stalk of the 50S ribosomal subunit. Interacts with L10 and the large rRNA to form the base of the stalk. L10 forms an elongated spine to which L12 dimers bind in a sequential fashion forming a multimeric L10(L12)X complex.</text>
</comment>
<comment type="PTM">
    <text evidence="1">One or more lysine residues are methylated.</text>
</comment>
<comment type="similarity">
    <text evidence="1">Belongs to the universal ribosomal protein uL11 family.</text>
</comment>
<keyword id="KW-0488">Methylation</keyword>
<keyword id="KW-0687">Ribonucleoprotein</keyword>
<keyword id="KW-0689">Ribosomal protein</keyword>
<keyword id="KW-0694">RNA-binding</keyword>
<keyword id="KW-0699">rRNA-binding</keyword>
<gene>
    <name evidence="1" type="primary">rplK</name>
    <name type="synonym">rl11</name>
    <name type="ordered locus">CPn_0077</name>
    <name type="ordered locus">CP_0698</name>
    <name type="ordered locus">CpB0077</name>
</gene>
<sequence length="141" mass="15089">MSVKKVIKIIKLQIPGGKANPAPPIGPALGAAGVNIMGFCKEFNAATQDKPGDLLPVVITVYADKTFTFITKQPPVSSLIKKTLNLESGSKIPNRNKVGKLTQAQVEAIAEQKMKDMDIVLLESAKRMVEGTARSMGIDVE</sequence>
<feature type="chain" id="PRO_0000104269" description="Large ribosomal subunit protein uL11">
    <location>
        <begin position="1"/>
        <end position="141"/>
    </location>
</feature>
<organism>
    <name type="scientific">Chlamydia pneumoniae</name>
    <name type="common">Chlamydophila pneumoniae</name>
    <dbReference type="NCBI Taxonomy" id="83558"/>
    <lineage>
        <taxon>Bacteria</taxon>
        <taxon>Pseudomonadati</taxon>
        <taxon>Chlamydiota</taxon>
        <taxon>Chlamydiia</taxon>
        <taxon>Chlamydiales</taxon>
        <taxon>Chlamydiaceae</taxon>
        <taxon>Chlamydia/Chlamydophila group</taxon>
        <taxon>Chlamydia</taxon>
    </lineage>
</organism>
<dbReference type="EMBL" id="AE001363">
    <property type="protein sequence ID" value="AAD18230.1"/>
    <property type="molecule type" value="Genomic_DNA"/>
</dbReference>
<dbReference type="EMBL" id="AE002161">
    <property type="protein sequence ID" value="AAF38506.1"/>
    <property type="molecule type" value="Genomic_DNA"/>
</dbReference>
<dbReference type="EMBL" id="BA000008">
    <property type="protein sequence ID" value="BAA98287.1"/>
    <property type="molecule type" value="Genomic_DNA"/>
</dbReference>
<dbReference type="EMBL" id="AE009440">
    <property type="protein sequence ID" value="AAP98010.1"/>
    <property type="molecule type" value="Genomic_DNA"/>
</dbReference>
<dbReference type="PIR" id="E86500">
    <property type="entry name" value="E86500"/>
</dbReference>
<dbReference type="PIR" id="H72121">
    <property type="entry name" value="H72121"/>
</dbReference>
<dbReference type="RefSeq" id="NP_224285.1">
    <property type="nucleotide sequence ID" value="NC_000922.1"/>
</dbReference>
<dbReference type="RefSeq" id="WP_010882727.1">
    <property type="nucleotide sequence ID" value="NZ_LN847257.1"/>
</dbReference>
<dbReference type="SMR" id="Q9Z9A4"/>
<dbReference type="STRING" id="406984.CPK_ORF00585"/>
<dbReference type="GeneID" id="45050122"/>
<dbReference type="KEGG" id="cpa:CP_0698"/>
<dbReference type="KEGG" id="cpj:rl11"/>
<dbReference type="KEGG" id="cpn:CPn_0077"/>
<dbReference type="KEGG" id="cpt:CpB0077"/>
<dbReference type="PATRIC" id="fig|115713.3.peg.88"/>
<dbReference type="eggNOG" id="COG0080">
    <property type="taxonomic scope" value="Bacteria"/>
</dbReference>
<dbReference type="HOGENOM" id="CLU_074237_2_0_0"/>
<dbReference type="OMA" id="CKQFNAK"/>
<dbReference type="OrthoDB" id="9802408at2"/>
<dbReference type="Proteomes" id="UP000000583">
    <property type="component" value="Chromosome"/>
</dbReference>
<dbReference type="Proteomes" id="UP000000801">
    <property type="component" value="Chromosome"/>
</dbReference>
<dbReference type="GO" id="GO:0022625">
    <property type="term" value="C:cytosolic large ribosomal subunit"/>
    <property type="evidence" value="ECO:0007669"/>
    <property type="project" value="TreeGrafter"/>
</dbReference>
<dbReference type="GO" id="GO:0070180">
    <property type="term" value="F:large ribosomal subunit rRNA binding"/>
    <property type="evidence" value="ECO:0007669"/>
    <property type="project" value="UniProtKB-UniRule"/>
</dbReference>
<dbReference type="GO" id="GO:0003735">
    <property type="term" value="F:structural constituent of ribosome"/>
    <property type="evidence" value="ECO:0007669"/>
    <property type="project" value="InterPro"/>
</dbReference>
<dbReference type="GO" id="GO:0006412">
    <property type="term" value="P:translation"/>
    <property type="evidence" value="ECO:0007669"/>
    <property type="project" value="UniProtKB-UniRule"/>
</dbReference>
<dbReference type="CDD" id="cd00349">
    <property type="entry name" value="Ribosomal_L11"/>
    <property type="match status" value="1"/>
</dbReference>
<dbReference type="FunFam" id="1.10.10.250:FF:000001">
    <property type="entry name" value="50S ribosomal protein L11"/>
    <property type="match status" value="1"/>
</dbReference>
<dbReference type="FunFam" id="3.30.1550.10:FF:000001">
    <property type="entry name" value="50S ribosomal protein L11"/>
    <property type="match status" value="1"/>
</dbReference>
<dbReference type="Gene3D" id="1.10.10.250">
    <property type="entry name" value="Ribosomal protein L11, C-terminal domain"/>
    <property type="match status" value="1"/>
</dbReference>
<dbReference type="Gene3D" id="3.30.1550.10">
    <property type="entry name" value="Ribosomal protein L11/L12, N-terminal domain"/>
    <property type="match status" value="1"/>
</dbReference>
<dbReference type="HAMAP" id="MF_00736">
    <property type="entry name" value="Ribosomal_uL11"/>
    <property type="match status" value="1"/>
</dbReference>
<dbReference type="InterPro" id="IPR000911">
    <property type="entry name" value="Ribosomal_uL11"/>
</dbReference>
<dbReference type="InterPro" id="IPR006519">
    <property type="entry name" value="Ribosomal_uL11_bac-typ"/>
</dbReference>
<dbReference type="InterPro" id="IPR020783">
    <property type="entry name" value="Ribosomal_uL11_C"/>
</dbReference>
<dbReference type="InterPro" id="IPR036769">
    <property type="entry name" value="Ribosomal_uL11_C_sf"/>
</dbReference>
<dbReference type="InterPro" id="IPR020785">
    <property type="entry name" value="Ribosomal_uL11_CS"/>
</dbReference>
<dbReference type="InterPro" id="IPR020784">
    <property type="entry name" value="Ribosomal_uL11_N"/>
</dbReference>
<dbReference type="InterPro" id="IPR036796">
    <property type="entry name" value="Ribosomal_uL11_N_sf"/>
</dbReference>
<dbReference type="NCBIfam" id="TIGR01632">
    <property type="entry name" value="L11_bact"/>
    <property type="match status" value="1"/>
</dbReference>
<dbReference type="PANTHER" id="PTHR11661">
    <property type="entry name" value="60S RIBOSOMAL PROTEIN L12"/>
    <property type="match status" value="1"/>
</dbReference>
<dbReference type="PANTHER" id="PTHR11661:SF1">
    <property type="entry name" value="LARGE RIBOSOMAL SUBUNIT PROTEIN UL11M"/>
    <property type="match status" value="1"/>
</dbReference>
<dbReference type="Pfam" id="PF00298">
    <property type="entry name" value="Ribosomal_L11"/>
    <property type="match status" value="1"/>
</dbReference>
<dbReference type="Pfam" id="PF03946">
    <property type="entry name" value="Ribosomal_L11_N"/>
    <property type="match status" value="1"/>
</dbReference>
<dbReference type="SMART" id="SM00649">
    <property type="entry name" value="RL11"/>
    <property type="match status" value="1"/>
</dbReference>
<dbReference type="SUPFAM" id="SSF54747">
    <property type="entry name" value="Ribosomal L11/L12e N-terminal domain"/>
    <property type="match status" value="1"/>
</dbReference>
<dbReference type="SUPFAM" id="SSF46906">
    <property type="entry name" value="Ribosomal protein L11, C-terminal domain"/>
    <property type="match status" value="1"/>
</dbReference>
<dbReference type="PROSITE" id="PS00359">
    <property type="entry name" value="RIBOSOMAL_L11"/>
    <property type="match status" value="1"/>
</dbReference>
<evidence type="ECO:0000255" key="1">
    <source>
        <dbReference type="HAMAP-Rule" id="MF_00736"/>
    </source>
</evidence>
<evidence type="ECO:0000305" key="2"/>
<accession>Q9Z9A4</accession>
<accession>Q9JQA0</accession>